<sequence length="65" mass="7347">MSQLKITQVRSTIGARWKQRESLRTLGLRRIRHSVIREDNAATRGLIAVVRHLVEVEPAQTGGKT</sequence>
<evidence type="ECO:0000255" key="1">
    <source>
        <dbReference type="HAMAP-Rule" id="MF_01371"/>
    </source>
</evidence>
<evidence type="ECO:0000305" key="2"/>
<organism>
    <name type="scientific">Mycobacterium bovis (strain BCG / Tokyo 172 / ATCC 35737 / TMC 1019)</name>
    <dbReference type="NCBI Taxonomy" id="561275"/>
    <lineage>
        <taxon>Bacteria</taxon>
        <taxon>Bacillati</taxon>
        <taxon>Actinomycetota</taxon>
        <taxon>Actinomycetes</taxon>
        <taxon>Mycobacteriales</taxon>
        <taxon>Mycobacteriaceae</taxon>
        <taxon>Mycobacterium</taxon>
        <taxon>Mycobacterium tuberculosis complex</taxon>
    </lineage>
</organism>
<accession>C1AL56</accession>
<protein>
    <recommendedName>
        <fullName evidence="1">Large ribosomal subunit protein uL30</fullName>
    </recommendedName>
    <alternativeName>
        <fullName evidence="2">50S ribosomal protein L30</fullName>
    </alternativeName>
</protein>
<reference key="1">
    <citation type="journal article" date="2009" name="Vaccine">
        <title>Whole genome sequence analysis of Mycobacterium bovis bacillus Calmette-Guerin (BCG) Tokyo 172: a comparative study of BCG vaccine substrains.</title>
        <authorList>
            <person name="Seki M."/>
            <person name="Honda I."/>
            <person name="Fujita I."/>
            <person name="Yano I."/>
            <person name="Yamamoto S."/>
            <person name="Koyama A."/>
        </authorList>
    </citation>
    <scope>NUCLEOTIDE SEQUENCE [LARGE SCALE GENOMIC DNA]</scope>
    <source>
        <strain>BCG / Tokyo 172 / ATCC 35737 / TMC 1019</strain>
    </source>
</reference>
<gene>
    <name evidence="1" type="primary">rpmD</name>
    <name type="ordered locus">JTY_0742</name>
</gene>
<dbReference type="EMBL" id="AP010918">
    <property type="protein sequence ID" value="BAH25035.1"/>
    <property type="molecule type" value="Genomic_DNA"/>
</dbReference>
<dbReference type="RefSeq" id="WP_003403683.1">
    <property type="nucleotide sequence ID" value="NZ_CP014566.1"/>
</dbReference>
<dbReference type="SMR" id="C1AL56"/>
<dbReference type="GeneID" id="45424687"/>
<dbReference type="KEGG" id="mbt:JTY_0742"/>
<dbReference type="HOGENOM" id="CLU_131047_2_0_11"/>
<dbReference type="GO" id="GO:0022625">
    <property type="term" value="C:cytosolic large ribosomal subunit"/>
    <property type="evidence" value="ECO:0007669"/>
    <property type="project" value="TreeGrafter"/>
</dbReference>
<dbReference type="GO" id="GO:0003735">
    <property type="term" value="F:structural constituent of ribosome"/>
    <property type="evidence" value="ECO:0007669"/>
    <property type="project" value="InterPro"/>
</dbReference>
<dbReference type="GO" id="GO:0006412">
    <property type="term" value="P:translation"/>
    <property type="evidence" value="ECO:0007669"/>
    <property type="project" value="UniProtKB-UniRule"/>
</dbReference>
<dbReference type="CDD" id="cd01658">
    <property type="entry name" value="Ribosomal_L30"/>
    <property type="match status" value="1"/>
</dbReference>
<dbReference type="FunFam" id="3.30.1390.20:FF:000001">
    <property type="entry name" value="50S ribosomal protein L30"/>
    <property type="match status" value="1"/>
</dbReference>
<dbReference type="Gene3D" id="3.30.1390.20">
    <property type="entry name" value="Ribosomal protein L30, ferredoxin-like fold domain"/>
    <property type="match status" value="1"/>
</dbReference>
<dbReference type="HAMAP" id="MF_01371_B">
    <property type="entry name" value="Ribosomal_uL30_B"/>
    <property type="match status" value="1"/>
</dbReference>
<dbReference type="InterPro" id="IPR036919">
    <property type="entry name" value="Ribo_uL30_ferredoxin-like_sf"/>
</dbReference>
<dbReference type="InterPro" id="IPR005996">
    <property type="entry name" value="Ribosomal_uL30_bac-type"/>
</dbReference>
<dbReference type="InterPro" id="IPR018038">
    <property type="entry name" value="Ribosomal_uL30_CS"/>
</dbReference>
<dbReference type="InterPro" id="IPR016082">
    <property type="entry name" value="Ribosomal_uL30_ferredoxin-like"/>
</dbReference>
<dbReference type="NCBIfam" id="TIGR01308">
    <property type="entry name" value="rpmD_bact"/>
    <property type="match status" value="1"/>
</dbReference>
<dbReference type="PANTHER" id="PTHR15892:SF2">
    <property type="entry name" value="LARGE RIBOSOMAL SUBUNIT PROTEIN UL30M"/>
    <property type="match status" value="1"/>
</dbReference>
<dbReference type="PANTHER" id="PTHR15892">
    <property type="entry name" value="MITOCHONDRIAL RIBOSOMAL PROTEIN L30"/>
    <property type="match status" value="1"/>
</dbReference>
<dbReference type="Pfam" id="PF00327">
    <property type="entry name" value="Ribosomal_L30"/>
    <property type="match status" value="1"/>
</dbReference>
<dbReference type="PIRSF" id="PIRSF002211">
    <property type="entry name" value="Ribosomal_L30_bac-type"/>
    <property type="match status" value="1"/>
</dbReference>
<dbReference type="SUPFAM" id="SSF55129">
    <property type="entry name" value="Ribosomal protein L30p/L7e"/>
    <property type="match status" value="1"/>
</dbReference>
<dbReference type="PROSITE" id="PS00634">
    <property type="entry name" value="RIBOSOMAL_L30"/>
    <property type="match status" value="1"/>
</dbReference>
<proteinExistence type="inferred from homology"/>
<feature type="chain" id="PRO_1000184152" description="Large ribosomal subunit protein uL30">
    <location>
        <begin position="1"/>
        <end position="65"/>
    </location>
</feature>
<comment type="subunit">
    <text evidence="1">Part of the 50S ribosomal subunit.</text>
</comment>
<comment type="similarity">
    <text evidence="1">Belongs to the universal ribosomal protein uL30 family.</text>
</comment>
<name>RL30_MYCBT</name>
<keyword id="KW-0687">Ribonucleoprotein</keyword>
<keyword id="KW-0689">Ribosomal protein</keyword>